<dbReference type="EMBL" id="AL049480">
    <property type="protein sequence ID" value="CAB39607.1"/>
    <property type="status" value="ALT_SEQ"/>
    <property type="molecule type" value="Genomic_DNA"/>
</dbReference>
<dbReference type="EMBL" id="AL161564">
    <property type="protein sequence ID" value="CAB79441.1"/>
    <property type="status" value="ALT_SEQ"/>
    <property type="molecule type" value="Genomic_DNA"/>
</dbReference>
<dbReference type="EMBL" id="CP002687">
    <property type="protein sequence ID" value="AEE85125.1"/>
    <property type="molecule type" value="Genomic_DNA"/>
</dbReference>
<dbReference type="EMBL" id="BX828422">
    <property type="status" value="NOT_ANNOTATED_CDS"/>
    <property type="molecule type" value="mRNA"/>
</dbReference>
<dbReference type="PIR" id="T04240">
    <property type="entry name" value="T04240"/>
</dbReference>
<dbReference type="RefSeq" id="NP_001329919.1">
    <property type="nucleotide sequence ID" value="NM_001341766.1"/>
</dbReference>
<dbReference type="RefSeq" id="NP_194316.2">
    <property type="nucleotide sequence ID" value="NM_118719.4"/>
</dbReference>
<dbReference type="SMR" id="Q9SVZ9"/>
<dbReference type="BioGRID" id="13979">
    <property type="interactions" value="1"/>
</dbReference>
<dbReference type="FunCoup" id="Q9SVZ9">
    <property type="interactions" value="1929"/>
</dbReference>
<dbReference type="STRING" id="3702.Q9SVZ9"/>
<dbReference type="TCDB" id="2.D.1.1.5">
    <property type="family name" value="the pi4p/ps counter transporter (p/p-ct) family"/>
</dbReference>
<dbReference type="PaxDb" id="3702-AT4G25860.1"/>
<dbReference type="ProteomicsDB" id="248737"/>
<dbReference type="EnsemblPlants" id="AT4G25860.1">
    <property type="protein sequence ID" value="AT4G25860.1"/>
    <property type="gene ID" value="AT4G25860"/>
</dbReference>
<dbReference type="GeneID" id="828692"/>
<dbReference type="Gramene" id="AT4G25860.1">
    <property type="protein sequence ID" value="AT4G25860.1"/>
    <property type="gene ID" value="AT4G25860"/>
</dbReference>
<dbReference type="KEGG" id="ath:AT4G25860"/>
<dbReference type="Araport" id="AT4G25860"/>
<dbReference type="TAIR" id="AT4G25860">
    <property type="gene designation" value="ORP4A"/>
</dbReference>
<dbReference type="eggNOG" id="KOG2210">
    <property type="taxonomic scope" value="Eukaryota"/>
</dbReference>
<dbReference type="HOGENOM" id="CLU_044270_0_0_1"/>
<dbReference type="InParanoid" id="Q9SVZ9"/>
<dbReference type="PhylomeDB" id="Q9SVZ9"/>
<dbReference type="PRO" id="PR:Q9SVZ9"/>
<dbReference type="Proteomes" id="UP000006548">
    <property type="component" value="Chromosome 4"/>
</dbReference>
<dbReference type="ExpressionAtlas" id="Q9SVZ9">
    <property type="expression patterns" value="baseline and differential"/>
</dbReference>
<dbReference type="GO" id="GO:0008289">
    <property type="term" value="F:lipid binding"/>
    <property type="evidence" value="ECO:0007669"/>
    <property type="project" value="UniProtKB-KW"/>
</dbReference>
<dbReference type="GO" id="GO:0006869">
    <property type="term" value="P:lipid transport"/>
    <property type="evidence" value="ECO:0007669"/>
    <property type="project" value="UniProtKB-KW"/>
</dbReference>
<dbReference type="FunFam" id="3.30.70.3490:FF:000007">
    <property type="entry name" value="Oxysterol-binding protein-related protein 4B"/>
    <property type="match status" value="1"/>
</dbReference>
<dbReference type="FunFam" id="2.40.160.120:FF:000011">
    <property type="entry name" value="Oxysterol-binding protein-related protein 4C"/>
    <property type="match status" value="1"/>
</dbReference>
<dbReference type="Gene3D" id="2.40.160.120">
    <property type="match status" value="1"/>
</dbReference>
<dbReference type="Gene3D" id="3.30.70.3490">
    <property type="match status" value="1"/>
</dbReference>
<dbReference type="InterPro" id="IPR037239">
    <property type="entry name" value="OSBP_sf"/>
</dbReference>
<dbReference type="InterPro" id="IPR000648">
    <property type="entry name" value="Oxysterol-bd"/>
</dbReference>
<dbReference type="PANTHER" id="PTHR10972:SF102">
    <property type="entry name" value="OXYSTEROL-BINDING PROTEIN"/>
    <property type="match status" value="1"/>
</dbReference>
<dbReference type="PANTHER" id="PTHR10972">
    <property type="entry name" value="OXYSTEROL-BINDING PROTEIN-RELATED"/>
    <property type="match status" value="1"/>
</dbReference>
<dbReference type="Pfam" id="PF01237">
    <property type="entry name" value="Oxysterol_BP"/>
    <property type="match status" value="1"/>
</dbReference>
<dbReference type="SUPFAM" id="SSF144000">
    <property type="entry name" value="Oxysterol-binding protein-like"/>
    <property type="match status" value="1"/>
</dbReference>
<sequence length="386" mass="44072">MAEEEKMRRQLVLAKPFSLEDEKDSELTASSVIRKILSLIKTVRPGSDLTNFQLPPQLILPRSRLQCYGEMIYSFGGQDLLGECSRRNIPIERLKSVVTWNISTLRPVVVGMSPYNPILGETHHVSNGYINVLTEQVMHHPPVSALHATHEQENIDVTWCQYFTPKFRGAYVDVEVNGKRIMKLLHHKETYEMDQPRLIMKFLPAPGAHWAGKVKIKCPETDLEAELHLISDSFIERFRGNNNRSIKGKIFESSSGNQLYNIFGHWDRTVMAKNLKTGGLEVIYNANENITGLKPPTVKNLQEVMESESTIVWSEVSEGILKKDWERAREAKILVEEKQREALKQREASGESWVPKHFSVVKDGKDWHCSPLQPTVPRAPLVITEK</sequence>
<proteinExistence type="evidence at transcript level"/>
<accession>Q9SVZ9</accession>
<keyword id="KW-0445">Lipid transport</keyword>
<keyword id="KW-0446">Lipid-binding</keyword>
<keyword id="KW-1185">Reference proteome</keyword>
<keyword id="KW-0813">Transport</keyword>
<reference key="1">
    <citation type="journal article" date="1999" name="Nature">
        <title>Sequence and analysis of chromosome 4 of the plant Arabidopsis thaliana.</title>
        <authorList>
            <person name="Mayer K.F.X."/>
            <person name="Schueller C."/>
            <person name="Wambutt R."/>
            <person name="Murphy G."/>
            <person name="Volckaert G."/>
            <person name="Pohl T."/>
            <person name="Duesterhoeft A."/>
            <person name="Stiekema W."/>
            <person name="Entian K.-D."/>
            <person name="Terryn N."/>
            <person name="Harris B."/>
            <person name="Ansorge W."/>
            <person name="Brandt P."/>
            <person name="Grivell L.A."/>
            <person name="Rieger M."/>
            <person name="Weichselgartner M."/>
            <person name="de Simone V."/>
            <person name="Obermaier B."/>
            <person name="Mache R."/>
            <person name="Mueller M."/>
            <person name="Kreis M."/>
            <person name="Delseny M."/>
            <person name="Puigdomenech P."/>
            <person name="Watson M."/>
            <person name="Schmidtheini T."/>
            <person name="Reichert B."/>
            <person name="Portetelle D."/>
            <person name="Perez-Alonso M."/>
            <person name="Boutry M."/>
            <person name="Bancroft I."/>
            <person name="Vos P."/>
            <person name="Hoheisel J."/>
            <person name="Zimmermann W."/>
            <person name="Wedler H."/>
            <person name="Ridley P."/>
            <person name="Langham S.-A."/>
            <person name="McCullagh B."/>
            <person name="Bilham L."/>
            <person name="Robben J."/>
            <person name="van der Schueren J."/>
            <person name="Grymonprez B."/>
            <person name="Chuang Y.-J."/>
            <person name="Vandenbussche F."/>
            <person name="Braeken M."/>
            <person name="Weltjens I."/>
            <person name="Voet M."/>
            <person name="Bastiaens I."/>
            <person name="Aert R."/>
            <person name="Defoor E."/>
            <person name="Weitzenegger T."/>
            <person name="Bothe G."/>
            <person name="Ramsperger U."/>
            <person name="Hilbert H."/>
            <person name="Braun M."/>
            <person name="Holzer E."/>
            <person name="Brandt A."/>
            <person name="Peters S."/>
            <person name="van Staveren M."/>
            <person name="Dirkse W."/>
            <person name="Mooijman P."/>
            <person name="Klein Lankhorst R."/>
            <person name="Rose M."/>
            <person name="Hauf J."/>
            <person name="Koetter P."/>
            <person name="Berneiser S."/>
            <person name="Hempel S."/>
            <person name="Feldpausch M."/>
            <person name="Lamberth S."/>
            <person name="Van den Daele H."/>
            <person name="De Keyser A."/>
            <person name="Buysshaert C."/>
            <person name="Gielen J."/>
            <person name="Villarroel R."/>
            <person name="De Clercq R."/>
            <person name="van Montagu M."/>
            <person name="Rogers J."/>
            <person name="Cronin A."/>
            <person name="Quail M.A."/>
            <person name="Bray-Allen S."/>
            <person name="Clark L."/>
            <person name="Doggett J."/>
            <person name="Hall S."/>
            <person name="Kay M."/>
            <person name="Lennard N."/>
            <person name="McLay K."/>
            <person name="Mayes R."/>
            <person name="Pettett A."/>
            <person name="Rajandream M.A."/>
            <person name="Lyne M."/>
            <person name="Benes V."/>
            <person name="Rechmann S."/>
            <person name="Borkova D."/>
            <person name="Bloecker H."/>
            <person name="Scharfe M."/>
            <person name="Grimm M."/>
            <person name="Loehnert T.-H."/>
            <person name="Dose S."/>
            <person name="de Haan M."/>
            <person name="Maarse A.C."/>
            <person name="Schaefer M."/>
            <person name="Mueller-Auer S."/>
            <person name="Gabel C."/>
            <person name="Fuchs M."/>
            <person name="Fartmann B."/>
            <person name="Granderath K."/>
            <person name="Dauner D."/>
            <person name="Herzl A."/>
            <person name="Neumann S."/>
            <person name="Argiriou A."/>
            <person name="Vitale D."/>
            <person name="Liguori R."/>
            <person name="Piravandi E."/>
            <person name="Massenet O."/>
            <person name="Quigley F."/>
            <person name="Clabauld G."/>
            <person name="Muendlein A."/>
            <person name="Felber R."/>
            <person name="Schnabl S."/>
            <person name="Hiller R."/>
            <person name="Schmidt W."/>
            <person name="Lecharny A."/>
            <person name="Aubourg S."/>
            <person name="Chefdor F."/>
            <person name="Cooke R."/>
            <person name="Berger C."/>
            <person name="Monfort A."/>
            <person name="Casacuberta E."/>
            <person name="Gibbons T."/>
            <person name="Weber N."/>
            <person name="Vandenbol M."/>
            <person name="Bargues M."/>
            <person name="Terol J."/>
            <person name="Torres A."/>
            <person name="Perez-Perez A."/>
            <person name="Purnelle B."/>
            <person name="Bent E."/>
            <person name="Johnson S."/>
            <person name="Tacon D."/>
            <person name="Jesse T."/>
            <person name="Heijnen L."/>
            <person name="Schwarz S."/>
            <person name="Scholler P."/>
            <person name="Heber S."/>
            <person name="Francs P."/>
            <person name="Bielke C."/>
            <person name="Frishman D."/>
            <person name="Haase D."/>
            <person name="Lemcke K."/>
            <person name="Mewes H.-W."/>
            <person name="Stocker S."/>
            <person name="Zaccaria P."/>
            <person name="Bevan M."/>
            <person name="Wilson R.K."/>
            <person name="de la Bastide M."/>
            <person name="Habermann K."/>
            <person name="Parnell L."/>
            <person name="Dedhia N."/>
            <person name="Gnoj L."/>
            <person name="Schutz K."/>
            <person name="Huang E."/>
            <person name="Spiegel L."/>
            <person name="Sekhon M."/>
            <person name="Murray J."/>
            <person name="Sheet P."/>
            <person name="Cordes M."/>
            <person name="Abu-Threideh J."/>
            <person name="Stoneking T."/>
            <person name="Kalicki J."/>
            <person name="Graves T."/>
            <person name="Harmon G."/>
            <person name="Edwards J."/>
            <person name="Latreille P."/>
            <person name="Courtney L."/>
            <person name="Cloud J."/>
            <person name="Abbott A."/>
            <person name="Scott K."/>
            <person name="Johnson D."/>
            <person name="Minx P."/>
            <person name="Bentley D."/>
            <person name="Fulton B."/>
            <person name="Miller N."/>
            <person name="Greco T."/>
            <person name="Kemp K."/>
            <person name="Kramer J."/>
            <person name="Fulton L."/>
            <person name="Mardis E."/>
            <person name="Dante M."/>
            <person name="Pepin K."/>
            <person name="Hillier L.W."/>
            <person name="Nelson J."/>
            <person name="Spieth J."/>
            <person name="Ryan E."/>
            <person name="Andrews S."/>
            <person name="Geisel C."/>
            <person name="Layman D."/>
            <person name="Du H."/>
            <person name="Ali J."/>
            <person name="Berghoff A."/>
            <person name="Jones K."/>
            <person name="Drone K."/>
            <person name="Cotton M."/>
            <person name="Joshu C."/>
            <person name="Antonoiu B."/>
            <person name="Zidanic M."/>
            <person name="Strong C."/>
            <person name="Sun H."/>
            <person name="Lamar B."/>
            <person name="Yordan C."/>
            <person name="Ma P."/>
            <person name="Zhong J."/>
            <person name="Preston R."/>
            <person name="Vil D."/>
            <person name="Shekher M."/>
            <person name="Matero A."/>
            <person name="Shah R."/>
            <person name="Swaby I.K."/>
            <person name="O'Shaughnessy A."/>
            <person name="Rodriguez M."/>
            <person name="Hoffman J."/>
            <person name="Till S."/>
            <person name="Granat S."/>
            <person name="Shohdy N."/>
            <person name="Hasegawa A."/>
            <person name="Hameed A."/>
            <person name="Lodhi M."/>
            <person name="Johnson A."/>
            <person name="Chen E."/>
            <person name="Marra M.A."/>
            <person name="Martienssen R."/>
            <person name="McCombie W.R."/>
        </authorList>
    </citation>
    <scope>NUCLEOTIDE SEQUENCE [LARGE SCALE GENOMIC DNA]</scope>
    <source>
        <strain>cv. Columbia</strain>
    </source>
</reference>
<reference key="2">
    <citation type="journal article" date="2017" name="Plant J.">
        <title>Araport11: a complete reannotation of the Arabidopsis thaliana reference genome.</title>
        <authorList>
            <person name="Cheng C.Y."/>
            <person name="Krishnakumar V."/>
            <person name="Chan A.P."/>
            <person name="Thibaud-Nissen F."/>
            <person name="Schobel S."/>
            <person name="Town C.D."/>
        </authorList>
    </citation>
    <scope>GENOME REANNOTATION</scope>
    <source>
        <strain>cv. Columbia</strain>
    </source>
</reference>
<reference key="3">
    <citation type="journal article" date="2004" name="Genome Res.">
        <title>Whole genome sequence comparisons and 'full-length' cDNA sequences: a combined approach to evaluate and improve Arabidopsis genome annotation.</title>
        <authorList>
            <person name="Castelli V."/>
            <person name="Aury J.-M."/>
            <person name="Jaillon O."/>
            <person name="Wincker P."/>
            <person name="Clepet C."/>
            <person name="Menard M."/>
            <person name="Cruaud C."/>
            <person name="Quetier F."/>
            <person name="Scarpelli C."/>
            <person name="Schaechter V."/>
            <person name="Temple G."/>
            <person name="Caboche M."/>
            <person name="Weissenbach J."/>
            <person name="Salanoubat M."/>
        </authorList>
    </citation>
    <scope>NUCLEOTIDE SEQUENCE [LARGE SCALE MRNA]</scope>
    <source>
        <strain>cv. Columbia</strain>
    </source>
</reference>
<reference key="4">
    <citation type="journal article" date="2006" name="Plant Mol. Biol.">
        <title>Identification and characterization of PiORP1, a Petunia oxysterol-binding-protein related protein involved in receptor-kinase mediated signaling in pollen, and analysis of the ORP gene family in Arabidopsis.</title>
        <authorList>
            <person name="Skirpan A.L."/>
            <person name="Dowd P.E."/>
            <person name="Sijacic P."/>
            <person name="Jaworski C.J."/>
            <person name="Gilroy S."/>
            <person name="Kao T.H."/>
        </authorList>
    </citation>
    <scope>TISSUE SPECIFICITY</scope>
    <scope>GENE FAMILY</scope>
    <scope>NOMENCLATURE</scope>
</reference>
<evidence type="ECO:0000250" key="1"/>
<evidence type="ECO:0000269" key="2">
    <source>
    </source>
</evidence>
<evidence type="ECO:0000305" key="3"/>
<organism>
    <name type="scientific">Arabidopsis thaliana</name>
    <name type="common">Mouse-ear cress</name>
    <dbReference type="NCBI Taxonomy" id="3702"/>
    <lineage>
        <taxon>Eukaryota</taxon>
        <taxon>Viridiplantae</taxon>
        <taxon>Streptophyta</taxon>
        <taxon>Embryophyta</taxon>
        <taxon>Tracheophyta</taxon>
        <taxon>Spermatophyta</taxon>
        <taxon>Magnoliopsida</taxon>
        <taxon>eudicotyledons</taxon>
        <taxon>Gunneridae</taxon>
        <taxon>Pentapetalae</taxon>
        <taxon>rosids</taxon>
        <taxon>malvids</taxon>
        <taxon>Brassicales</taxon>
        <taxon>Brassicaceae</taxon>
        <taxon>Camelineae</taxon>
        <taxon>Arabidopsis</taxon>
    </lineage>
</organism>
<protein>
    <recommendedName>
        <fullName>Oxysterol-binding protein-related protein 4A</fullName>
    </recommendedName>
    <alternativeName>
        <fullName>OSBP-related protein 4A</fullName>
    </alternativeName>
</protein>
<comment type="function">
    <text evidence="1">May be involved in the transport of sterols.</text>
</comment>
<comment type="tissue specificity">
    <text evidence="2">Expressed in roots, stems and flowers.</text>
</comment>
<comment type="similarity">
    <text evidence="3">Belongs to the OSBP family.</text>
</comment>
<comment type="sequence caution" evidence="3">
    <conflict type="erroneous gene model prediction">
        <sequence resource="EMBL-CDS" id="CAB39607"/>
    </conflict>
</comment>
<comment type="sequence caution" evidence="3">
    <conflict type="erroneous gene model prediction">
        <sequence resource="EMBL-CDS" id="CAB79441"/>
    </conflict>
</comment>
<gene>
    <name type="primary">ORP4A</name>
    <name type="ordered locus">At4g25860</name>
    <name type="ORF">F14M19.140</name>
</gene>
<feature type="chain" id="PRO_0000402165" description="Oxysterol-binding protein-related protein 4A">
    <location>
        <begin position="1"/>
        <end position="386"/>
    </location>
</feature>
<name>ORP4A_ARATH</name>